<proteinExistence type="inferred from homology"/>
<comment type="function">
    <text evidence="1">Electron carrier protein. The oxidized form of the cytochrome c heme group can accept an electron from the heme group of the cytochrome c1 subunit of cytochrome reductase. Cytochrome c then transfers this electron to the cytochrome oxidase complex, the final protein carrier in the mitochondrial electron-transport chain (By similarity).</text>
</comment>
<comment type="function">
    <text evidence="1">Plays a role in apoptosis. Suppression of the anti-apoptotic members or activation of the pro-apoptotic members of the Bcl-2 family leads to altered mitochondrial membrane permeability resulting in release of cytochrome c into the cytosol. Binding of cytochrome c to Apaf-1 triggers the activation of caspase-9, which then accelerates apoptosis by activating other caspases (By similarity).</text>
</comment>
<comment type="subcellular location">
    <subcellularLocation>
        <location evidence="1">Mitochondrion intermembrane space</location>
    </subcellularLocation>
    <text evidence="1">Loosely associated with the inner membrane.</text>
</comment>
<comment type="PTM">
    <text evidence="1">Binds 1 heme c group covalently per subunit.</text>
</comment>
<comment type="PTM">
    <text evidence="1">Phosphorylation at Tyr-49 and Tyr-98 both reduce by half the turnover in the reaction with cytochrome c oxidase, down-regulating mitochondrial respiration.</text>
</comment>
<comment type="similarity">
    <text evidence="5">Belongs to the cytochrome c family.</text>
</comment>
<comment type="online information" name="Protein Spotlight">
    <link uri="https://www.proteinspotlight.org/back_issues/076"/>
    <text>Life shuttle - Issue 76 of November 2006</text>
</comment>
<reference key="1">
    <citation type="journal article" date="2005" name="Proc. Natl. Acad. Sci. U.S.A.">
        <title>Rapid electrostatic evolution at the binding site for cytochrome c on cytochrome c oxidase in anthropoid primates.</title>
        <authorList>
            <person name="Schmidt T.R."/>
            <person name="Wildman D.E."/>
            <person name="Uddin M."/>
            <person name="Opazo J.C."/>
            <person name="Goodman M."/>
            <person name="Grossman L.I."/>
        </authorList>
    </citation>
    <scope>NUCLEOTIDE SEQUENCE [GENOMIC DNA]</scope>
</reference>
<feature type="initiator methionine" description="Removed" evidence="2">
    <location>
        <position position="1"/>
    </location>
</feature>
<feature type="chain" id="PRO_0000108235" description="Cytochrome c">
    <location>
        <begin position="2"/>
        <end position="105"/>
    </location>
</feature>
<feature type="binding site" description="covalent" evidence="4">
    <location>
        <position position="15"/>
    </location>
    <ligand>
        <name>heme c</name>
        <dbReference type="ChEBI" id="CHEBI:61717"/>
    </ligand>
</feature>
<feature type="binding site" description="covalent" evidence="4">
    <location>
        <position position="18"/>
    </location>
    <ligand>
        <name>heme c</name>
        <dbReference type="ChEBI" id="CHEBI:61717"/>
    </ligand>
</feature>
<feature type="binding site" description="axial binding residue" evidence="4">
    <location>
        <position position="19"/>
    </location>
    <ligand>
        <name>heme c</name>
        <dbReference type="ChEBI" id="CHEBI:61717"/>
    </ligand>
    <ligandPart>
        <name>Fe</name>
        <dbReference type="ChEBI" id="CHEBI:18248"/>
    </ligandPart>
</feature>
<feature type="binding site" description="axial binding residue" evidence="4">
    <location>
        <position position="81"/>
    </location>
    <ligand>
        <name>heme c</name>
        <dbReference type="ChEBI" id="CHEBI:61717"/>
    </ligand>
    <ligandPart>
        <name>Fe</name>
        <dbReference type="ChEBI" id="CHEBI:18248"/>
    </ligandPart>
</feature>
<feature type="modified residue" description="N-acetylglycine" evidence="2">
    <location>
        <position position="2"/>
    </location>
</feature>
<feature type="modified residue" description="Phosphotyrosine" evidence="2">
    <location>
        <position position="49"/>
    </location>
</feature>
<feature type="modified residue" description="N6-succinyllysine" evidence="3">
    <location>
        <position position="56"/>
    </location>
</feature>
<feature type="modified residue" description="N6-acetyllysine; alternate" evidence="3">
    <location>
        <position position="73"/>
    </location>
</feature>
<feature type="modified residue" description="N6-succinyllysine; alternate" evidence="3">
    <location>
        <position position="73"/>
    </location>
</feature>
<feature type="modified residue" description="Phosphotyrosine" evidence="2">
    <location>
        <position position="98"/>
    </location>
</feature>
<feature type="modified residue" description="N6-acetyllysine" evidence="3">
    <location>
        <position position="100"/>
    </location>
</feature>
<keyword id="KW-0007">Acetylation</keyword>
<keyword id="KW-0053">Apoptosis</keyword>
<keyword id="KW-0249">Electron transport</keyword>
<keyword id="KW-0349">Heme</keyword>
<keyword id="KW-0408">Iron</keyword>
<keyword id="KW-0479">Metal-binding</keyword>
<keyword id="KW-0496">Mitochondrion</keyword>
<keyword id="KW-0597">Phosphoprotein</keyword>
<keyword id="KW-0679">Respiratory chain</keyword>
<keyword id="KW-0813">Transport</keyword>
<gene>
    <name type="primary">CYCS</name>
</gene>
<sequence>MGDVEKGKKIFVQKCAQCHTVEKGGKHKTGXNLHGLFGRKTGQAAGFSYTDANKNKGITWGEDTLMEYLENPKKYIPGTKMIFAGIKKKGERADLIAYLKKATNE</sequence>
<accession>Q52V09</accession>
<dbReference type="EMBL" id="AY918494">
    <property type="protein sequence ID" value="AAY17033.1"/>
    <property type="molecule type" value="Genomic_DNA"/>
</dbReference>
<dbReference type="GO" id="GO:0005758">
    <property type="term" value="C:mitochondrial intermembrane space"/>
    <property type="evidence" value="ECO:0007669"/>
    <property type="project" value="UniProtKB-SubCell"/>
</dbReference>
<dbReference type="GO" id="GO:0009055">
    <property type="term" value="F:electron transfer activity"/>
    <property type="evidence" value="ECO:0007669"/>
    <property type="project" value="InterPro"/>
</dbReference>
<dbReference type="GO" id="GO:0020037">
    <property type="term" value="F:heme binding"/>
    <property type="evidence" value="ECO:0007669"/>
    <property type="project" value="InterPro"/>
</dbReference>
<dbReference type="GO" id="GO:0046872">
    <property type="term" value="F:metal ion binding"/>
    <property type="evidence" value="ECO:0007669"/>
    <property type="project" value="UniProtKB-KW"/>
</dbReference>
<dbReference type="GO" id="GO:0006915">
    <property type="term" value="P:apoptotic process"/>
    <property type="evidence" value="ECO:0007669"/>
    <property type="project" value="UniProtKB-KW"/>
</dbReference>
<dbReference type="FunFam" id="1.10.760.10:FF:000008">
    <property type="entry name" value="Cytochrome c"/>
    <property type="match status" value="1"/>
</dbReference>
<dbReference type="Gene3D" id="1.10.760.10">
    <property type="entry name" value="Cytochrome c-like domain"/>
    <property type="match status" value="1"/>
</dbReference>
<dbReference type="InterPro" id="IPR009056">
    <property type="entry name" value="Cyt_c-like_dom"/>
</dbReference>
<dbReference type="InterPro" id="IPR036909">
    <property type="entry name" value="Cyt_c-like_dom_sf"/>
</dbReference>
<dbReference type="InterPro" id="IPR002327">
    <property type="entry name" value="Cyt_c_1A/1B"/>
</dbReference>
<dbReference type="PANTHER" id="PTHR11961">
    <property type="entry name" value="CYTOCHROME C"/>
    <property type="match status" value="1"/>
</dbReference>
<dbReference type="Pfam" id="PF00034">
    <property type="entry name" value="Cytochrom_C"/>
    <property type="match status" value="1"/>
</dbReference>
<dbReference type="PRINTS" id="PR00604">
    <property type="entry name" value="CYTCHRMECIAB"/>
</dbReference>
<dbReference type="SUPFAM" id="SSF46626">
    <property type="entry name" value="Cytochrome c"/>
    <property type="match status" value="1"/>
</dbReference>
<dbReference type="PROSITE" id="PS51007">
    <property type="entry name" value="CYTC"/>
    <property type="match status" value="1"/>
</dbReference>
<evidence type="ECO:0000250" key="1"/>
<evidence type="ECO:0000250" key="2">
    <source>
        <dbReference type="UniProtKB" id="P62894"/>
    </source>
</evidence>
<evidence type="ECO:0000250" key="3">
    <source>
        <dbReference type="UniProtKB" id="P62897"/>
    </source>
</evidence>
<evidence type="ECO:0000255" key="4">
    <source>
        <dbReference type="PROSITE-ProRule" id="PRU00433"/>
    </source>
</evidence>
<evidence type="ECO:0000305" key="5"/>
<protein>
    <recommendedName>
        <fullName>Cytochrome c</fullName>
    </recommendedName>
</protein>
<name>CYC_CEPBA</name>
<organism>
    <name type="scientific">Cephalopachus bancanus</name>
    <name type="common">Western tarsier</name>
    <name type="synonym">Tarsius bancanus</name>
    <dbReference type="NCBI Taxonomy" id="9477"/>
    <lineage>
        <taxon>Eukaryota</taxon>
        <taxon>Metazoa</taxon>
        <taxon>Chordata</taxon>
        <taxon>Craniata</taxon>
        <taxon>Vertebrata</taxon>
        <taxon>Euteleostomi</taxon>
        <taxon>Mammalia</taxon>
        <taxon>Eutheria</taxon>
        <taxon>Euarchontoglires</taxon>
        <taxon>Primates</taxon>
        <taxon>Haplorrhini</taxon>
        <taxon>Tarsiiformes</taxon>
        <taxon>Tarsiidae</taxon>
        <taxon>Cephalopachus</taxon>
    </lineage>
</organism>